<reference key="1">
    <citation type="submission" date="2006-08" db="EMBL/GenBank/DDBJ databases">
        <title>Complete sequence of Maricaulis maris MCS10.</title>
        <authorList>
            <consortium name="US DOE Joint Genome Institute"/>
            <person name="Copeland A."/>
            <person name="Lucas S."/>
            <person name="Lapidus A."/>
            <person name="Barry K."/>
            <person name="Detter J.C."/>
            <person name="Glavina del Rio T."/>
            <person name="Hammon N."/>
            <person name="Israni S."/>
            <person name="Dalin E."/>
            <person name="Tice H."/>
            <person name="Pitluck S."/>
            <person name="Saunders E."/>
            <person name="Brettin T."/>
            <person name="Bruce D."/>
            <person name="Han C."/>
            <person name="Tapia R."/>
            <person name="Gilna P."/>
            <person name="Schmutz J."/>
            <person name="Larimer F."/>
            <person name="Land M."/>
            <person name="Hauser L."/>
            <person name="Kyrpides N."/>
            <person name="Mikhailova N."/>
            <person name="Viollier P."/>
            <person name="Stephens C."/>
            <person name="Richardson P."/>
        </authorList>
    </citation>
    <scope>NUCLEOTIDE SEQUENCE [LARGE SCALE GENOMIC DNA]</scope>
    <source>
        <strain>MCS10</strain>
    </source>
</reference>
<keyword id="KW-1185">Reference proteome</keyword>
<keyword id="KW-0687">Ribonucleoprotein</keyword>
<keyword id="KW-0689">Ribosomal protein</keyword>
<dbReference type="EMBL" id="CP000449">
    <property type="protein sequence ID" value="ABI67067.1"/>
    <property type="molecule type" value="Genomic_DNA"/>
</dbReference>
<dbReference type="RefSeq" id="WP_011644711.1">
    <property type="nucleotide sequence ID" value="NC_008347.1"/>
</dbReference>
<dbReference type="SMR" id="Q0AKX6"/>
<dbReference type="STRING" id="394221.Mmar10_2785"/>
<dbReference type="KEGG" id="mmr:Mmar10_2785"/>
<dbReference type="eggNOG" id="COG0211">
    <property type="taxonomic scope" value="Bacteria"/>
</dbReference>
<dbReference type="HOGENOM" id="CLU_095424_4_1_5"/>
<dbReference type="OrthoDB" id="9803474at2"/>
<dbReference type="Proteomes" id="UP000001964">
    <property type="component" value="Chromosome"/>
</dbReference>
<dbReference type="GO" id="GO:0022625">
    <property type="term" value="C:cytosolic large ribosomal subunit"/>
    <property type="evidence" value="ECO:0007669"/>
    <property type="project" value="TreeGrafter"/>
</dbReference>
<dbReference type="GO" id="GO:0003735">
    <property type="term" value="F:structural constituent of ribosome"/>
    <property type="evidence" value="ECO:0007669"/>
    <property type="project" value="InterPro"/>
</dbReference>
<dbReference type="GO" id="GO:0006412">
    <property type="term" value="P:translation"/>
    <property type="evidence" value="ECO:0007669"/>
    <property type="project" value="UniProtKB-UniRule"/>
</dbReference>
<dbReference type="FunFam" id="2.40.50.100:FF:000020">
    <property type="entry name" value="50S ribosomal protein L27"/>
    <property type="match status" value="1"/>
</dbReference>
<dbReference type="Gene3D" id="2.40.50.100">
    <property type="match status" value="1"/>
</dbReference>
<dbReference type="HAMAP" id="MF_00539">
    <property type="entry name" value="Ribosomal_bL27"/>
    <property type="match status" value="1"/>
</dbReference>
<dbReference type="InterPro" id="IPR001684">
    <property type="entry name" value="Ribosomal_bL27"/>
</dbReference>
<dbReference type="InterPro" id="IPR018261">
    <property type="entry name" value="Ribosomal_bL27_CS"/>
</dbReference>
<dbReference type="NCBIfam" id="TIGR00062">
    <property type="entry name" value="L27"/>
    <property type="match status" value="1"/>
</dbReference>
<dbReference type="PANTHER" id="PTHR15893:SF0">
    <property type="entry name" value="LARGE RIBOSOMAL SUBUNIT PROTEIN BL27M"/>
    <property type="match status" value="1"/>
</dbReference>
<dbReference type="PANTHER" id="PTHR15893">
    <property type="entry name" value="RIBOSOMAL PROTEIN L27"/>
    <property type="match status" value="1"/>
</dbReference>
<dbReference type="Pfam" id="PF01016">
    <property type="entry name" value="Ribosomal_L27"/>
    <property type="match status" value="1"/>
</dbReference>
<dbReference type="PRINTS" id="PR00063">
    <property type="entry name" value="RIBOSOMALL27"/>
</dbReference>
<dbReference type="SUPFAM" id="SSF110324">
    <property type="entry name" value="Ribosomal L27 protein-like"/>
    <property type="match status" value="1"/>
</dbReference>
<dbReference type="PROSITE" id="PS00831">
    <property type="entry name" value="RIBOSOMAL_L27"/>
    <property type="match status" value="1"/>
</dbReference>
<gene>
    <name evidence="1" type="primary">rpmA</name>
    <name type="ordered locus">Mmar10_2785</name>
</gene>
<feature type="chain" id="PRO_1000017512" description="Large ribosomal subunit protein bL27">
    <location>
        <begin position="1"/>
        <end position="89"/>
    </location>
</feature>
<feature type="region of interest" description="Disordered" evidence="2">
    <location>
        <begin position="1"/>
        <end position="24"/>
    </location>
</feature>
<evidence type="ECO:0000255" key="1">
    <source>
        <dbReference type="HAMAP-Rule" id="MF_00539"/>
    </source>
</evidence>
<evidence type="ECO:0000256" key="2">
    <source>
        <dbReference type="SAM" id="MobiDB-lite"/>
    </source>
</evidence>
<evidence type="ECO:0000305" key="3"/>
<comment type="similarity">
    <text evidence="1">Belongs to the bacterial ribosomal protein bL27 family.</text>
</comment>
<name>RL27_MARMM</name>
<accession>Q0AKX6</accession>
<proteinExistence type="inferred from homology"/>
<sequence length="89" mass="9275">MAHKKAGGSSRNGRDSAGRRLGVKKYGGQEVIPGNIIVRQRGTKVNPGANVGMGKDHTLFALTEGRVVFAKKSGGKAFVSVEPIAKAAE</sequence>
<protein>
    <recommendedName>
        <fullName evidence="1">Large ribosomal subunit protein bL27</fullName>
    </recommendedName>
    <alternativeName>
        <fullName evidence="3">50S ribosomal protein L27</fullName>
    </alternativeName>
</protein>
<organism>
    <name type="scientific">Maricaulis maris (strain MCS10)</name>
    <name type="common">Caulobacter maris</name>
    <dbReference type="NCBI Taxonomy" id="394221"/>
    <lineage>
        <taxon>Bacteria</taxon>
        <taxon>Pseudomonadati</taxon>
        <taxon>Pseudomonadota</taxon>
        <taxon>Alphaproteobacteria</taxon>
        <taxon>Maricaulales</taxon>
        <taxon>Maricaulaceae</taxon>
        <taxon>Maricaulis</taxon>
    </lineage>
</organism>